<dbReference type="EC" id="5.4.99.62" evidence="1"/>
<dbReference type="EMBL" id="CP000812">
    <property type="protein sequence ID" value="ABV32759.1"/>
    <property type="molecule type" value="Genomic_DNA"/>
</dbReference>
<dbReference type="RefSeq" id="WP_012002240.1">
    <property type="nucleotide sequence ID" value="NZ_BSDV01000001.1"/>
</dbReference>
<dbReference type="SMR" id="A8F3M5"/>
<dbReference type="STRING" id="416591.Tlet_0189"/>
<dbReference type="KEGG" id="tle:Tlet_0189"/>
<dbReference type="eggNOG" id="COG1869">
    <property type="taxonomic scope" value="Bacteria"/>
</dbReference>
<dbReference type="HOGENOM" id="CLU_135498_0_0_0"/>
<dbReference type="OrthoDB" id="9805009at2"/>
<dbReference type="UniPathway" id="UPA00916">
    <property type="reaction ID" value="UER00888"/>
</dbReference>
<dbReference type="Proteomes" id="UP000002016">
    <property type="component" value="Chromosome"/>
</dbReference>
<dbReference type="GO" id="GO:0005829">
    <property type="term" value="C:cytosol"/>
    <property type="evidence" value="ECO:0007669"/>
    <property type="project" value="TreeGrafter"/>
</dbReference>
<dbReference type="GO" id="GO:0062193">
    <property type="term" value="F:D-ribose pyranase activity"/>
    <property type="evidence" value="ECO:0007669"/>
    <property type="project" value="UniProtKB-EC"/>
</dbReference>
<dbReference type="GO" id="GO:0016872">
    <property type="term" value="F:intramolecular lyase activity"/>
    <property type="evidence" value="ECO:0007669"/>
    <property type="project" value="UniProtKB-UniRule"/>
</dbReference>
<dbReference type="GO" id="GO:0048029">
    <property type="term" value="F:monosaccharide binding"/>
    <property type="evidence" value="ECO:0007669"/>
    <property type="project" value="InterPro"/>
</dbReference>
<dbReference type="GO" id="GO:0019303">
    <property type="term" value="P:D-ribose catabolic process"/>
    <property type="evidence" value="ECO:0007669"/>
    <property type="project" value="UniProtKB-UniRule"/>
</dbReference>
<dbReference type="Gene3D" id="3.40.1650.10">
    <property type="entry name" value="RbsD-like domain"/>
    <property type="match status" value="1"/>
</dbReference>
<dbReference type="HAMAP" id="MF_01661">
    <property type="entry name" value="D_rib_pyranase"/>
    <property type="match status" value="1"/>
</dbReference>
<dbReference type="InterPro" id="IPR023064">
    <property type="entry name" value="D-ribose_pyranase"/>
</dbReference>
<dbReference type="InterPro" id="IPR023750">
    <property type="entry name" value="RbsD-like_sf"/>
</dbReference>
<dbReference type="InterPro" id="IPR007721">
    <property type="entry name" value="RbsD_FucU"/>
</dbReference>
<dbReference type="NCBIfam" id="NF008761">
    <property type="entry name" value="PRK11797.1"/>
    <property type="match status" value="1"/>
</dbReference>
<dbReference type="PANTHER" id="PTHR37831">
    <property type="entry name" value="D-RIBOSE PYRANASE"/>
    <property type="match status" value="1"/>
</dbReference>
<dbReference type="PANTHER" id="PTHR37831:SF1">
    <property type="entry name" value="D-RIBOSE PYRANASE"/>
    <property type="match status" value="1"/>
</dbReference>
<dbReference type="Pfam" id="PF05025">
    <property type="entry name" value="RbsD_FucU"/>
    <property type="match status" value="1"/>
</dbReference>
<dbReference type="SUPFAM" id="SSF102546">
    <property type="entry name" value="RbsD-like"/>
    <property type="match status" value="1"/>
</dbReference>
<keyword id="KW-0119">Carbohydrate metabolism</keyword>
<keyword id="KW-0963">Cytoplasm</keyword>
<keyword id="KW-0413">Isomerase</keyword>
<keyword id="KW-1185">Reference proteome</keyword>
<proteinExistence type="inferred from homology"/>
<sequence length="140" mass="15709">MKKNGILNRELSYLIASMGHGDILSIVDSGFPISEDVFCVDLSLIAGKPKIVEIIIPLLEELEIEKVLIAEEIKMISPKYHQKLLSIFPKNVQIEYIPHEKFKDRVRESKGVVRTGEQTSYSSVILVGGVTYHGEKEEGL</sequence>
<feature type="chain" id="PRO_0000346290" description="D-ribose pyranase">
    <location>
        <begin position="1"/>
        <end position="140"/>
    </location>
</feature>
<feature type="active site" description="Proton donor" evidence="1">
    <location>
        <position position="20"/>
    </location>
</feature>
<feature type="binding site" evidence="1">
    <location>
        <position position="28"/>
    </location>
    <ligand>
        <name>substrate</name>
    </ligand>
</feature>
<feature type="binding site" evidence="1">
    <location>
        <position position="99"/>
    </location>
    <ligand>
        <name>substrate</name>
    </ligand>
</feature>
<feature type="binding site" evidence="1">
    <location>
        <begin position="121"/>
        <end position="123"/>
    </location>
    <ligand>
        <name>substrate</name>
    </ligand>
</feature>
<accession>A8F3M5</accession>
<gene>
    <name evidence="1" type="primary">rbsD</name>
    <name type="ordered locus">Tlet_0189</name>
</gene>
<reference key="1">
    <citation type="submission" date="2007-08" db="EMBL/GenBank/DDBJ databases">
        <title>Complete sequence of Thermotoga lettingae TMO.</title>
        <authorList>
            <consortium name="US DOE Joint Genome Institute"/>
            <person name="Copeland A."/>
            <person name="Lucas S."/>
            <person name="Lapidus A."/>
            <person name="Barry K."/>
            <person name="Glavina del Rio T."/>
            <person name="Dalin E."/>
            <person name="Tice H."/>
            <person name="Pitluck S."/>
            <person name="Foster B."/>
            <person name="Bruce D."/>
            <person name="Schmutz J."/>
            <person name="Larimer F."/>
            <person name="Land M."/>
            <person name="Hauser L."/>
            <person name="Kyrpides N."/>
            <person name="Mikhailova N."/>
            <person name="Nelson K."/>
            <person name="Gogarten J.P."/>
            <person name="Noll K."/>
            <person name="Richardson P."/>
        </authorList>
    </citation>
    <scope>NUCLEOTIDE SEQUENCE [LARGE SCALE GENOMIC DNA]</scope>
    <source>
        <strain>ATCC BAA-301 / DSM 14385 / NBRC 107922 / TMO</strain>
    </source>
</reference>
<name>RBSD_PSELT</name>
<comment type="function">
    <text evidence="1">Catalyzes the interconversion of beta-pyran and beta-furan forms of D-ribose.</text>
</comment>
<comment type="catalytic activity">
    <reaction evidence="1">
        <text>beta-D-ribopyranose = beta-D-ribofuranose</text>
        <dbReference type="Rhea" id="RHEA:25432"/>
        <dbReference type="ChEBI" id="CHEBI:27476"/>
        <dbReference type="ChEBI" id="CHEBI:47002"/>
        <dbReference type="EC" id="5.4.99.62"/>
    </reaction>
</comment>
<comment type="pathway">
    <text evidence="1">Carbohydrate metabolism; D-ribose degradation; D-ribose 5-phosphate from beta-D-ribopyranose: step 1/2.</text>
</comment>
<comment type="subunit">
    <text evidence="1">Homodecamer.</text>
</comment>
<comment type="subcellular location">
    <subcellularLocation>
        <location evidence="1">Cytoplasm</location>
    </subcellularLocation>
</comment>
<comment type="similarity">
    <text evidence="1">Belongs to the RbsD / FucU family. RbsD subfamily.</text>
</comment>
<organism>
    <name type="scientific">Pseudothermotoga lettingae (strain ATCC BAA-301 / DSM 14385 / NBRC 107922 / TMO)</name>
    <name type="common">Thermotoga lettingae</name>
    <dbReference type="NCBI Taxonomy" id="416591"/>
    <lineage>
        <taxon>Bacteria</taxon>
        <taxon>Thermotogati</taxon>
        <taxon>Thermotogota</taxon>
        <taxon>Thermotogae</taxon>
        <taxon>Thermotogales</taxon>
        <taxon>Thermotogaceae</taxon>
        <taxon>Pseudothermotoga</taxon>
    </lineage>
</organism>
<protein>
    <recommendedName>
        <fullName evidence="1">D-ribose pyranase</fullName>
        <ecNumber evidence="1">5.4.99.62</ecNumber>
    </recommendedName>
</protein>
<evidence type="ECO:0000255" key="1">
    <source>
        <dbReference type="HAMAP-Rule" id="MF_01661"/>
    </source>
</evidence>